<sequence length="70" mass="7726">MGFLITTLIFVVVGIIASLCVRICCNRGPSTNLLHLTLVITATVCCWMMWAIVYIAQMNPLIVPILSETE</sequence>
<evidence type="ECO:0000250" key="1"/>
<evidence type="ECO:0000255" key="2"/>
<evidence type="ECO:0000269" key="3">
    <source>
    </source>
</evidence>
<evidence type="ECO:0000305" key="4"/>
<proteinExistence type="inferred from homology"/>
<keyword id="KW-0333">Golgi apparatus</keyword>
<keyword id="KW-0375">Hydrogen ion transport</keyword>
<keyword id="KW-0406">Ion transport</keyword>
<keyword id="KW-0472">Membrane</keyword>
<keyword id="KW-1185">Reference proteome</keyword>
<keyword id="KW-0812">Transmembrane</keyword>
<keyword id="KW-1133">Transmembrane helix</keyword>
<keyword id="KW-0813">Transport</keyword>
<name>VA0E1_ARATH</name>
<feature type="chain" id="PRO_0000430417" description="V-type proton ATPase subunit e1">
    <location>
        <begin position="1"/>
        <end position="70"/>
    </location>
</feature>
<feature type="transmembrane region" description="Helical; Name=1" evidence="2">
    <location>
        <begin position="1"/>
        <end position="21"/>
    </location>
</feature>
<feature type="transmembrane region" description="Helical; Name=2" evidence="2">
    <location>
        <begin position="36"/>
        <end position="56"/>
    </location>
</feature>
<reference key="1">
    <citation type="journal article" date="1998" name="DNA Res.">
        <title>Structural analysis of Arabidopsis thaliana chromosome 5. IV. Sequence features of the regions of 1,456,315 bp covered by nineteen physically assigned P1 and TAC clones.</title>
        <authorList>
            <person name="Sato S."/>
            <person name="Kaneko T."/>
            <person name="Kotani H."/>
            <person name="Nakamura Y."/>
            <person name="Asamizu E."/>
            <person name="Miyajima N."/>
            <person name="Tabata S."/>
        </authorList>
    </citation>
    <scope>NUCLEOTIDE SEQUENCE [LARGE SCALE GENOMIC DNA]</scope>
    <source>
        <strain>cv. Columbia</strain>
    </source>
</reference>
<reference key="2">
    <citation type="journal article" date="2017" name="Plant J.">
        <title>Araport11: a complete reannotation of the Arabidopsis thaliana reference genome.</title>
        <authorList>
            <person name="Cheng C.Y."/>
            <person name="Krishnakumar V."/>
            <person name="Chan A.P."/>
            <person name="Thibaud-Nissen F."/>
            <person name="Schobel S."/>
            <person name="Town C.D."/>
        </authorList>
    </citation>
    <scope>GENOME REANNOTATION</scope>
    <source>
        <strain>cv. Columbia</strain>
    </source>
</reference>
<reference key="3">
    <citation type="journal article" date="2003" name="Science">
        <title>Empirical analysis of transcriptional activity in the Arabidopsis genome.</title>
        <authorList>
            <person name="Yamada K."/>
            <person name="Lim J."/>
            <person name="Dale J.M."/>
            <person name="Chen H."/>
            <person name="Shinn P."/>
            <person name="Palm C.J."/>
            <person name="Southwick A.M."/>
            <person name="Wu H.C."/>
            <person name="Kim C.J."/>
            <person name="Nguyen M."/>
            <person name="Pham P.K."/>
            <person name="Cheuk R.F."/>
            <person name="Karlin-Newmann G."/>
            <person name="Liu S.X."/>
            <person name="Lam B."/>
            <person name="Sakano H."/>
            <person name="Wu T."/>
            <person name="Yu G."/>
            <person name="Miranda M."/>
            <person name="Quach H.L."/>
            <person name="Tripp M."/>
            <person name="Chang C.H."/>
            <person name="Lee J.M."/>
            <person name="Toriumi M.J."/>
            <person name="Chan M.M."/>
            <person name="Tang C.C."/>
            <person name="Onodera C.S."/>
            <person name="Deng J.M."/>
            <person name="Akiyama K."/>
            <person name="Ansari Y."/>
            <person name="Arakawa T."/>
            <person name="Banh J."/>
            <person name="Banno F."/>
            <person name="Bowser L."/>
            <person name="Brooks S.Y."/>
            <person name="Carninci P."/>
            <person name="Chao Q."/>
            <person name="Choy N."/>
            <person name="Enju A."/>
            <person name="Goldsmith A.D."/>
            <person name="Gurjal M."/>
            <person name="Hansen N.F."/>
            <person name="Hayashizaki Y."/>
            <person name="Johnson-Hopson C."/>
            <person name="Hsuan V.W."/>
            <person name="Iida K."/>
            <person name="Karnes M."/>
            <person name="Khan S."/>
            <person name="Koesema E."/>
            <person name="Ishida J."/>
            <person name="Jiang P.X."/>
            <person name="Jones T."/>
            <person name="Kawai J."/>
            <person name="Kamiya A."/>
            <person name="Meyers C."/>
            <person name="Nakajima M."/>
            <person name="Narusaka M."/>
            <person name="Seki M."/>
            <person name="Sakurai T."/>
            <person name="Satou M."/>
            <person name="Tamse R."/>
            <person name="Vaysberg M."/>
            <person name="Wallender E.K."/>
            <person name="Wong C."/>
            <person name="Yamamura Y."/>
            <person name="Yuan S."/>
            <person name="Shinozaki K."/>
            <person name="Davis R.W."/>
            <person name="Theologis A."/>
            <person name="Ecker J.R."/>
        </authorList>
    </citation>
    <scope>NUCLEOTIDE SEQUENCE [LARGE SCALE MRNA]</scope>
    <source>
        <strain>cv. Columbia</strain>
    </source>
</reference>
<reference key="4">
    <citation type="journal article" date="2009" name="DNA Res.">
        <title>Analysis of multiple occurrences of alternative splicing events in Arabidopsis thaliana using novel sequenced full-length cDNAs.</title>
        <authorList>
            <person name="Iida K."/>
            <person name="Fukami-Kobayashi K."/>
            <person name="Toyoda A."/>
            <person name="Sakaki Y."/>
            <person name="Kobayashi M."/>
            <person name="Seki M."/>
            <person name="Shinozaki K."/>
        </authorList>
    </citation>
    <scope>NUCLEOTIDE SEQUENCE [LARGE SCALE MRNA]</scope>
    <source>
        <strain>cv. Columbia</strain>
        <tissue>Rosette leaf</tissue>
    </source>
</reference>
<reference key="5">
    <citation type="journal article" date="2002" name="Trends Plant Sci.">
        <title>A simple nomenclature for a complex proton pump: VHA genes encode the vacuolar H(+)-ATPase.</title>
        <authorList>
            <person name="Sze H."/>
            <person name="Schumacher K."/>
            <person name="Mueller M.L."/>
            <person name="Padmanaban S."/>
            <person name="Taiz L."/>
        </authorList>
    </citation>
    <scope>GENE FAMILY</scope>
    <scope>NOMENCLATURE</scope>
</reference>
<reference key="6">
    <citation type="journal article" date="2008" name="BMC Cell Biol.">
        <title>Organelle-specific isoenzymes of plant V-ATPase as revealed by in vivo-FRET analysis.</title>
        <authorList>
            <person name="Seidel T."/>
            <person name="Schnitzer D."/>
            <person name="Golldack D."/>
            <person name="Sauer M."/>
            <person name="Dietz K.J."/>
        </authorList>
    </citation>
    <scope>SUBCELLULAR LOCATION</scope>
</reference>
<organism>
    <name type="scientific">Arabidopsis thaliana</name>
    <name type="common">Mouse-ear cress</name>
    <dbReference type="NCBI Taxonomy" id="3702"/>
    <lineage>
        <taxon>Eukaryota</taxon>
        <taxon>Viridiplantae</taxon>
        <taxon>Streptophyta</taxon>
        <taxon>Embryophyta</taxon>
        <taxon>Tracheophyta</taxon>
        <taxon>Spermatophyta</taxon>
        <taxon>Magnoliopsida</taxon>
        <taxon>eudicotyledons</taxon>
        <taxon>Gunneridae</taxon>
        <taxon>Pentapetalae</taxon>
        <taxon>rosids</taxon>
        <taxon>malvids</taxon>
        <taxon>Brassicales</taxon>
        <taxon>Brassicaceae</taxon>
        <taxon>Camelineae</taxon>
        <taxon>Arabidopsis</taxon>
    </lineage>
</organism>
<protein>
    <recommendedName>
        <fullName>V-type proton ATPase subunit e1</fullName>
        <shortName>V-ATPase subunit e1</shortName>
    </recommendedName>
    <alternativeName>
        <fullName>Vacuolar H(+)-ATPase subunit e isoform 1</fullName>
    </alternativeName>
    <alternativeName>
        <fullName>Vacuolar proton pump subunit e1</fullName>
    </alternativeName>
</protein>
<dbReference type="EMBL" id="AB010071">
    <property type="protein sequence ID" value="BAB08598.1"/>
    <property type="molecule type" value="Genomic_DNA"/>
</dbReference>
<dbReference type="EMBL" id="CP002688">
    <property type="protein sequence ID" value="AED96610.1"/>
    <property type="molecule type" value="Genomic_DNA"/>
</dbReference>
<dbReference type="EMBL" id="CP002688">
    <property type="protein sequence ID" value="AED96611.1"/>
    <property type="molecule type" value="Genomic_DNA"/>
</dbReference>
<dbReference type="EMBL" id="CP002688">
    <property type="protein sequence ID" value="ANM71144.1"/>
    <property type="molecule type" value="Genomic_DNA"/>
</dbReference>
<dbReference type="EMBL" id="AF372884">
    <property type="protein sequence ID" value="AAK49600.1"/>
    <property type="molecule type" value="mRNA"/>
</dbReference>
<dbReference type="EMBL" id="AY057717">
    <property type="protein sequence ID" value="AAL15347.1"/>
    <property type="molecule type" value="mRNA"/>
</dbReference>
<dbReference type="EMBL" id="AK318957">
    <property type="protein sequence ID" value="BAH57072.1"/>
    <property type="molecule type" value="mRNA"/>
</dbReference>
<dbReference type="RefSeq" id="NP_001154781.1">
    <property type="nucleotide sequence ID" value="NM_001161309.2"/>
</dbReference>
<dbReference type="RefSeq" id="NP_001332693.1">
    <property type="nucleotide sequence ID" value="NM_001345122.1"/>
</dbReference>
<dbReference type="RefSeq" id="NP_568823.1">
    <property type="nucleotide sequence ID" value="NM_124911.5"/>
</dbReference>
<dbReference type="SMR" id="Q9FLN5"/>
<dbReference type="BioGRID" id="20866">
    <property type="interactions" value="28"/>
</dbReference>
<dbReference type="FunCoup" id="Q9FLN5">
    <property type="interactions" value="2387"/>
</dbReference>
<dbReference type="IntAct" id="Q9FLN5">
    <property type="interactions" value="28"/>
</dbReference>
<dbReference type="STRING" id="3702.Q9FLN5"/>
<dbReference type="PaxDb" id="3702-AT5G55290.1"/>
<dbReference type="EnsemblPlants" id="AT5G55290.1">
    <property type="protein sequence ID" value="AT5G55290.1"/>
    <property type="gene ID" value="AT5G55290"/>
</dbReference>
<dbReference type="EnsemblPlants" id="AT5G55290.2">
    <property type="protein sequence ID" value="AT5G55290.2"/>
    <property type="gene ID" value="AT5G55290"/>
</dbReference>
<dbReference type="EnsemblPlants" id="AT5G55290.3">
    <property type="protein sequence ID" value="AT5G55290.3"/>
    <property type="gene ID" value="AT5G55290"/>
</dbReference>
<dbReference type="GeneID" id="835622"/>
<dbReference type="Gramene" id="AT5G55290.1">
    <property type="protein sequence ID" value="AT5G55290.1"/>
    <property type="gene ID" value="AT5G55290"/>
</dbReference>
<dbReference type="Gramene" id="AT5G55290.2">
    <property type="protein sequence ID" value="AT5G55290.2"/>
    <property type="gene ID" value="AT5G55290"/>
</dbReference>
<dbReference type="Gramene" id="AT5G55290.3">
    <property type="protein sequence ID" value="AT5G55290.3"/>
    <property type="gene ID" value="AT5G55290"/>
</dbReference>
<dbReference type="KEGG" id="ath:AT5G55290"/>
<dbReference type="Araport" id="AT5G55290"/>
<dbReference type="TAIR" id="AT5G55290"/>
<dbReference type="eggNOG" id="KOG3500">
    <property type="taxonomic scope" value="Eukaryota"/>
</dbReference>
<dbReference type="HOGENOM" id="CLU_170555_2_0_1"/>
<dbReference type="InParanoid" id="Q9FLN5"/>
<dbReference type="OMA" id="FCARICC"/>
<dbReference type="PhylomeDB" id="Q9FLN5"/>
<dbReference type="PRO" id="PR:Q9FLN5"/>
<dbReference type="Proteomes" id="UP000006548">
    <property type="component" value="Chromosome 5"/>
</dbReference>
<dbReference type="ExpressionAtlas" id="Q9FLN5">
    <property type="expression patterns" value="baseline and differential"/>
</dbReference>
<dbReference type="GO" id="GO:0005794">
    <property type="term" value="C:Golgi apparatus"/>
    <property type="evidence" value="ECO:0007669"/>
    <property type="project" value="UniProtKB-SubCell"/>
</dbReference>
<dbReference type="GO" id="GO:0033179">
    <property type="term" value="C:proton-transporting V-type ATPase, V0 domain"/>
    <property type="evidence" value="ECO:0007669"/>
    <property type="project" value="InterPro"/>
</dbReference>
<dbReference type="GO" id="GO:0005773">
    <property type="term" value="C:vacuole"/>
    <property type="evidence" value="ECO:0007005"/>
    <property type="project" value="TAIR"/>
</dbReference>
<dbReference type="GO" id="GO:0046961">
    <property type="term" value="F:proton-transporting ATPase activity, rotational mechanism"/>
    <property type="evidence" value="ECO:0007669"/>
    <property type="project" value="InterPro"/>
</dbReference>
<dbReference type="InterPro" id="IPR008389">
    <property type="entry name" value="ATPase_V0-cplx_e1/e2_su"/>
</dbReference>
<dbReference type="PANTHER" id="PTHR12263:SF15">
    <property type="entry name" value="V-TYPE PROTON ATPASE SUBUNIT E1"/>
    <property type="match status" value="1"/>
</dbReference>
<dbReference type="PANTHER" id="PTHR12263">
    <property type="entry name" value="VACUOLAR ATP SYNTHASE SUBUNIT H"/>
    <property type="match status" value="1"/>
</dbReference>
<dbReference type="Pfam" id="PF05493">
    <property type="entry name" value="ATP_synt_H"/>
    <property type="match status" value="1"/>
</dbReference>
<accession>Q9FLN5</accession>
<comment type="function">
    <text evidence="1">Subunit of the integral membrane V0 complex of vacuolar ATPase. V-ATPase is responsible for acidifying a variety of intracellular compartments in eukaryotic cells (By similarity).</text>
</comment>
<comment type="subunit">
    <text evidence="1">V-ATPase is a heteromultimeric enzyme composed of a peripheral catalytic V1 complex (components A to H) attached to an integral membrane V0 proton pore complex (components: a, c, c'', d and e).</text>
</comment>
<comment type="subcellular location">
    <subcellularLocation>
        <location evidence="3">Golgi apparatus</location>
        <location evidence="3">trans-Golgi network membrane</location>
        <topology evidence="3">Multi-pass membrane protein</topology>
    </subcellularLocation>
</comment>
<comment type="similarity">
    <text evidence="4">Belongs to the V-ATPase e1/e2 subunit family.</text>
</comment>
<gene>
    <name type="primary">VHA-e1</name>
    <name type="synonym">VMA9</name>
    <name type="ordered locus">At5g55290</name>
    <name type="ORF">MCO15_24</name>
</gene>